<protein>
    <recommendedName>
        <fullName evidence="1">tRNA pseudouridine synthase A</fullName>
        <ecNumber evidence="1">5.4.99.12</ecNumber>
    </recommendedName>
    <alternativeName>
        <fullName evidence="1">tRNA pseudouridine(38-40) synthase</fullName>
    </alternativeName>
    <alternativeName>
        <fullName evidence="1">tRNA pseudouridylate synthase I</fullName>
    </alternativeName>
    <alternativeName>
        <fullName evidence="1">tRNA-uridine isomerase I</fullName>
    </alternativeName>
</protein>
<gene>
    <name evidence="1" type="primary">truA</name>
    <name type="ordered locus">Plav_0263</name>
</gene>
<feature type="chain" id="PRO_1000071597" description="tRNA pseudouridine synthase A">
    <location>
        <begin position="1"/>
        <end position="246"/>
    </location>
</feature>
<feature type="active site" description="Nucleophile" evidence="1">
    <location>
        <position position="52"/>
    </location>
</feature>
<feature type="binding site" evidence="1">
    <location>
        <position position="111"/>
    </location>
    <ligand>
        <name>substrate</name>
    </ligand>
</feature>
<keyword id="KW-0413">Isomerase</keyword>
<keyword id="KW-1185">Reference proteome</keyword>
<keyword id="KW-0819">tRNA processing</keyword>
<reference key="1">
    <citation type="journal article" date="2011" name="Stand. Genomic Sci.">
        <title>Complete genome sequence of Parvibaculum lavamentivorans type strain (DS-1(T)).</title>
        <authorList>
            <person name="Schleheck D."/>
            <person name="Weiss M."/>
            <person name="Pitluck S."/>
            <person name="Bruce D."/>
            <person name="Land M.L."/>
            <person name="Han S."/>
            <person name="Saunders E."/>
            <person name="Tapia R."/>
            <person name="Detter C."/>
            <person name="Brettin T."/>
            <person name="Han J."/>
            <person name="Woyke T."/>
            <person name="Goodwin L."/>
            <person name="Pennacchio L."/>
            <person name="Nolan M."/>
            <person name="Cook A.M."/>
            <person name="Kjelleberg S."/>
            <person name="Thomas T."/>
        </authorList>
    </citation>
    <scope>NUCLEOTIDE SEQUENCE [LARGE SCALE GENOMIC DNA]</scope>
    <source>
        <strain>DS-1 / DSM 13023 / NCIMB 13966</strain>
    </source>
</reference>
<accession>A7HPQ3</accession>
<evidence type="ECO:0000255" key="1">
    <source>
        <dbReference type="HAMAP-Rule" id="MF_00171"/>
    </source>
</evidence>
<comment type="function">
    <text evidence="1">Formation of pseudouridine at positions 38, 39 and 40 in the anticodon stem and loop of transfer RNAs.</text>
</comment>
<comment type="catalytic activity">
    <reaction evidence="1">
        <text>uridine(38/39/40) in tRNA = pseudouridine(38/39/40) in tRNA</text>
        <dbReference type="Rhea" id="RHEA:22376"/>
        <dbReference type="Rhea" id="RHEA-COMP:10085"/>
        <dbReference type="Rhea" id="RHEA-COMP:10087"/>
        <dbReference type="ChEBI" id="CHEBI:65314"/>
        <dbReference type="ChEBI" id="CHEBI:65315"/>
        <dbReference type="EC" id="5.4.99.12"/>
    </reaction>
</comment>
<comment type="subunit">
    <text evidence="1">Homodimer.</text>
</comment>
<comment type="similarity">
    <text evidence="1">Belongs to the tRNA pseudouridine synthase TruA family.</text>
</comment>
<proteinExistence type="inferred from homology"/>
<name>TRUA_PARL1</name>
<sequence length="246" mass="27333">MPRYKLTIEYDGSPFVGWQAQTNGRSVQQVLEEGIKGFCGQELKIFGAGRTDAGVHALGQVAHVDFETPVAPDTLRDAVNAHMRPHPVAIVEAEEVPDSFEARFSAVKRHYMYRIVNRRAPLTLDRGQAWLVHKTLDADAMHDAAQALVGNHDFTTFRSVQCQAKSPVKTVDEISVSRYADEIEIVCRARSFLHNQVRSFVGTLKMVGDGSWTRRKVEKALAAKDRAACGPVAPPDGLYLLQVDYE</sequence>
<dbReference type="EC" id="5.4.99.12" evidence="1"/>
<dbReference type="EMBL" id="CP000774">
    <property type="protein sequence ID" value="ABS61886.1"/>
    <property type="molecule type" value="Genomic_DNA"/>
</dbReference>
<dbReference type="RefSeq" id="WP_011995177.1">
    <property type="nucleotide sequence ID" value="NC_009719.1"/>
</dbReference>
<dbReference type="SMR" id="A7HPQ3"/>
<dbReference type="STRING" id="402881.Plav_0263"/>
<dbReference type="KEGG" id="pla:Plav_0263"/>
<dbReference type="eggNOG" id="COG0101">
    <property type="taxonomic scope" value="Bacteria"/>
</dbReference>
<dbReference type="HOGENOM" id="CLU_014673_0_2_5"/>
<dbReference type="OrthoDB" id="9811823at2"/>
<dbReference type="Proteomes" id="UP000006377">
    <property type="component" value="Chromosome"/>
</dbReference>
<dbReference type="GO" id="GO:0003723">
    <property type="term" value="F:RNA binding"/>
    <property type="evidence" value="ECO:0007669"/>
    <property type="project" value="InterPro"/>
</dbReference>
<dbReference type="GO" id="GO:0160147">
    <property type="term" value="F:tRNA pseudouridine(38-40) synthase activity"/>
    <property type="evidence" value="ECO:0007669"/>
    <property type="project" value="UniProtKB-EC"/>
</dbReference>
<dbReference type="GO" id="GO:0031119">
    <property type="term" value="P:tRNA pseudouridine synthesis"/>
    <property type="evidence" value="ECO:0007669"/>
    <property type="project" value="UniProtKB-UniRule"/>
</dbReference>
<dbReference type="CDD" id="cd02570">
    <property type="entry name" value="PseudoU_synth_EcTruA"/>
    <property type="match status" value="1"/>
</dbReference>
<dbReference type="FunFam" id="3.30.70.580:FF:000001">
    <property type="entry name" value="tRNA pseudouridine synthase A"/>
    <property type="match status" value="1"/>
</dbReference>
<dbReference type="Gene3D" id="3.30.70.660">
    <property type="entry name" value="Pseudouridine synthase I, catalytic domain, C-terminal subdomain"/>
    <property type="match status" value="1"/>
</dbReference>
<dbReference type="Gene3D" id="3.30.70.580">
    <property type="entry name" value="Pseudouridine synthase I, catalytic domain, N-terminal subdomain"/>
    <property type="match status" value="1"/>
</dbReference>
<dbReference type="HAMAP" id="MF_00171">
    <property type="entry name" value="TruA"/>
    <property type="match status" value="1"/>
</dbReference>
<dbReference type="InterPro" id="IPR020103">
    <property type="entry name" value="PsdUridine_synth_cat_dom_sf"/>
</dbReference>
<dbReference type="InterPro" id="IPR001406">
    <property type="entry name" value="PsdUridine_synth_TruA"/>
</dbReference>
<dbReference type="InterPro" id="IPR020097">
    <property type="entry name" value="PsdUridine_synth_TruA_a/b_dom"/>
</dbReference>
<dbReference type="InterPro" id="IPR020095">
    <property type="entry name" value="PsdUridine_synth_TruA_C"/>
</dbReference>
<dbReference type="InterPro" id="IPR020094">
    <property type="entry name" value="TruA/RsuA/RluB/E/F_N"/>
</dbReference>
<dbReference type="NCBIfam" id="TIGR00071">
    <property type="entry name" value="hisT_truA"/>
    <property type="match status" value="1"/>
</dbReference>
<dbReference type="PANTHER" id="PTHR11142">
    <property type="entry name" value="PSEUDOURIDYLATE SYNTHASE"/>
    <property type="match status" value="1"/>
</dbReference>
<dbReference type="PANTHER" id="PTHR11142:SF0">
    <property type="entry name" value="TRNA PSEUDOURIDINE SYNTHASE-LIKE 1"/>
    <property type="match status" value="1"/>
</dbReference>
<dbReference type="Pfam" id="PF01416">
    <property type="entry name" value="PseudoU_synth_1"/>
    <property type="match status" value="2"/>
</dbReference>
<dbReference type="PIRSF" id="PIRSF001430">
    <property type="entry name" value="tRNA_psdUrid_synth"/>
    <property type="match status" value="1"/>
</dbReference>
<dbReference type="SUPFAM" id="SSF55120">
    <property type="entry name" value="Pseudouridine synthase"/>
    <property type="match status" value="1"/>
</dbReference>
<organism>
    <name type="scientific">Parvibaculum lavamentivorans (strain DS-1 / DSM 13023 / NCIMB 13966)</name>
    <dbReference type="NCBI Taxonomy" id="402881"/>
    <lineage>
        <taxon>Bacteria</taxon>
        <taxon>Pseudomonadati</taxon>
        <taxon>Pseudomonadota</taxon>
        <taxon>Alphaproteobacteria</taxon>
        <taxon>Hyphomicrobiales</taxon>
        <taxon>Parvibaculaceae</taxon>
        <taxon>Parvibaculum</taxon>
    </lineage>
</organism>